<reference key="1">
    <citation type="submission" date="2007-03" db="EMBL/GenBank/DDBJ databases">
        <title>Complete sequence of Shewanella loihica PV-4.</title>
        <authorList>
            <consortium name="US DOE Joint Genome Institute"/>
            <person name="Copeland A."/>
            <person name="Lucas S."/>
            <person name="Lapidus A."/>
            <person name="Barry K."/>
            <person name="Detter J.C."/>
            <person name="Glavina del Rio T."/>
            <person name="Hammon N."/>
            <person name="Israni S."/>
            <person name="Dalin E."/>
            <person name="Tice H."/>
            <person name="Pitluck S."/>
            <person name="Chain P."/>
            <person name="Malfatti S."/>
            <person name="Shin M."/>
            <person name="Vergez L."/>
            <person name="Schmutz J."/>
            <person name="Larimer F."/>
            <person name="Land M."/>
            <person name="Hauser L."/>
            <person name="Kyrpides N."/>
            <person name="Mikhailova N."/>
            <person name="Romine M.F."/>
            <person name="Serres G."/>
            <person name="Fredrickson J."/>
            <person name="Tiedje J."/>
            <person name="Richardson P."/>
        </authorList>
    </citation>
    <scope>NUCLEOTIDE SEQUENCE [LARGE SCALE GENOMIC DNA]</scope>
    <source>
        <strain>ATCC BAA-1088 / PV-4</strain>
    </source>
</reference>
<feature type="chain" id="PRO_1000019077" description="1-deoxy-D-xylulose-5-phosphate synthase">
    <location>
        <begin position="1"/>
        <end position="622"/>
    </location>
</feature>
<feature type="binding site" evidence="1">
    <location>
        <position position="80"/>
    </location>
    <ligand>
        <name>thiamine diphosphate</name>
        <dbReference type="ChEBI" id="CHEBI:58937"/>
    </ligand>
</feature>
<feature type="binding site" evidence="1">
    <location>
        <begin position="121"/>
        <end position="123"/>
    </location>
    <ligand>
        <name>thiamine diphosphate</name>
        <dbReference type="ChEBI" id="CHEBI:58937"/>
    </ligand>
</feature>
<feature type="binding site" evidence="1">
    <location>
        <position position="152"/>
    </location>
    <ligand>
        <name>Mg(2+)</name>
        <dbReference type="ChEBI" id="CHEBI:18420"/>
    </ligand>
</feature>
<feature type="binding site" evidence="1">
    <location>
        <begin position="153"/>
        <end position="154"/>
    </location>
    <ligand>
        <name>thiamine diphosphate</name>
        <dbReference type="ChEBI" id="CHEBI:58937"/>
    </ligand>
</feature>
<feature type="binding site" evidence="1">
    <location>
        <position position="181"/>
    </location>
    <ligand>
        <name>Mg(2+)</name>
        <dbReference type="ChEBI" id="CHEBI:18420"/>
    </ligand>
</feature>
<feature type="binding site" evidence="1">
    <location>
        <position position="181"/>
    </location>
    <ligand>
        <name>thiamine diphosphate</name>
        <dbReference type="ChEBI" id="CHEBI:58937"/>
    </ligand>
</feature>
<feature type="binding site" evidence="1">
    <location>
        <position position="288"/>
    </location>
    <ligand>
        <name>thiamine diphosphate</name>
        <dbReference type="ChEBI" id="CHEBI:58937"/>
    </ligand>
</feature>
<feature type="binding site" evidence="1">
    <location>
        <position position="370"/>
    </location>
    <ligand>
        <name>thiamine diphosphate</name>
        <dbReference type="ChEBI" id="CHEBI:58937"/>
    </ligand>
</feature>
<evidence type="ECO:0000255" key="1">
    <source>
        <dbReference type="HAMAP-Rule" id="MF_00315"/>
    </source>
</evidence>
<keyword id="KW-0414">Isoprene biosynthesis</keyword>
<keyword id="KW-0460">Magnesium</keyword>
<keyword id="KW-0479">Metal-binding</keyword>
<keyword id="KW-1185">Reference proteome</keyword>
<keyword id="KW-0784">Thiamine biosynthesis</keyword>
<keyword id="KW-0786">Thiamine pyrophosphate</keyword>
<keyword id="KW-0808">Transferase</keyword>
<accession>A3QGN9</accession>
<proteinExistence type="inferred from homology"/>
<name>DXS_SHELP</name>
<dbReference type="EC" id="2.2.1.7" evidence="1"/>
<dbReference type="EMBL" id="CP000606">
    <property type="protein sequence ID" value="ABO24637.1"/>
    <property type="molecule type" value="Genomic_DNA"/>
</dbReference>
<dbReference type="RefSeq" id="WP_011866568.1">
    <property type="nucleotide sequence ID" value="NC_009092.1"/>
</dbReference>
<dbReference type="SMR" id="A3QGN9"/>
<dbReference type="STRING" id="323850.Shew_2771"/>
<dbReference type="KEGG" id="slo:Shew_2771"/>
<dbReference type="eggNOG" id="COG1154">
    <property type="taxonomic scope" value="Bacteria"/>
</dbReference>
<dbReference type="HOGENOM" id="CLU_009227_1_4_6"/>
<dbReference type="OrthoDB" id="9803371at2"/>
<dbReference type="UniPathway" id="UPA00064">
    <property type="reaction ID" value="UER00091"/>
</dbReference>
<dbReference type="Proteomes" id="UP000001558">
    <property type="component" value="Chromosome"/>
</dbReference>
<dbReference type="GO" id="GO:0005829">
    <property type="term" value="C:cytosol"/>
    <property type="evidence" value="ECO:0007669"/>
    <property type="project" value="TreeGrafter"/>
</dbReference>
<dbReference type="GO" id="GO:0008661">
    <property type="term" value="F:1-deoxy-D-xylulose-5-phosphate synthase activity"/>
    <property type="evidence" value="ECO:0007669"/>
    <property type="project" value="UniProtKB-UniRule"/>
</dbReference>
<dbReference type="GO" id="GO:0000287">
    <property type="term" value="F:magnesium ion binding"/>
    <property type="evidence" value="ECO:0007669"/>
    <property type="project" value="UniProtKB-UniRule"/>
</dbReference>
<dbReference type="GO" id="GO:0030976">
    <property type="term" value="F:thiamine pyrophosphate binding"/>
    <property type="evidence" value="ECO:0007669"/>
    <property type="project" value="UniProtKB-UniRule"/>
</dbReference>
<dbReference type="GO" id="GO:0052865">
    <property type="term" value="P:1-deoxy-D-xylulose 5-phosphate biosynthetic process"/>
    <property type="evidence" value="ECO:0007669"/>
    <property type="project" value="UniProtKB-UniPathway"/>
</dbReference>
<dbReference type="GO" id="GO:0019288">
    <property type="term" value="P:isopentenyl diphosphate biosynthetic process, methylerythritol 4-phosphate pathway"/>
    <property type="evidence" value="ECO:0007669"/>
    <property type="project" value="TreeGrafter"/>
</dbReference>
<dbReference type="GO" id="GO:0016114">
    <property type="term" value="P:terpenoid biosynthetic process"/>
    <property type="evidence" value="ECO:0007669"/>
    <property type="project" value="UniProtKB-UniRule"/>
</dbReference>
<dbReference type="GO" id="GO:0009228">
    <property type="term" value="P:thiamine biosynthetic process"/>
    <property type="evidence" value="ECO:0007669"/>
    <property type="project" value="UniProtKB-UniRule"/>
</dbReference>
<dbReference type="CDD" id="cd02007">
    <property type="entry name" value="TPP_DXS"/>
    <property type="match status" value="1"/>
</dbReference>
<dbReference type="CDD" id="cd07033">
    <property type="entry name" value="TPP_PYR_DXS_TK_like"/>
    <property type="match status" value="1"/>
</dbReference>
<dbReference type="FunFam" id="3.40.50.920:FF:000002">
    <property type="entry name" value="1-deoxy-D-xylulose-5-phosphate synthase"/>
    <property type="match status" value="1"/>
</dbReference>
<dbReference type="FunFam" id="3.40.50.970:FF:000005">
    <property type="entry name" value="1-deoxy-D-xylulose-5-phosphate synthase"/>
    <property type="match status" value="1"/>
</dbReference>
<dbReference type="Gene3D" id="3.40.50.920">
    <property type="match status" value="1"/>
</dbReference>
<dbReference type="Gene3D" id="3.40.50.970">
    <property type="match status" value="2"/>
</dbReference>
<dbReference type="HAMAP" id="MF_00315">
    <property type="entry name" value="DXP_synth"/>
    <property type="match status" value="1"/>
</dbReference>
<dbReference type="InterPro" id="IPR005477">
    <property type="entry name" value="Dxylulose-5-P_synthase"/>
</dbReference>
<dbReference type="InterPro" id="IPR029061">
    <property type="entry name" value="THDP-binding"/>
</dbReference>
<dbReference type="InterPro" id="IPR009014">
    <property type="entry name" value="Transketo_C/PFOR_II"/>
</dbReference>
<dbReference type="InterPro" id="IPR005475">
    <property type="entry name" value="Transketolase-like_Pyr-bd"/>
</dbReference>
<dbReference type="InterPro" id="IPR020826">
    <property type="entry name" value="Transketolase_BS"/>
</dbReference>
<dbReference type="InterPro" id="IPR033248">
    <property type="entry name" value="Transketolase_C"/>
</dbReference>
<dbReference type="InterPro" id="IPR049557">
    <property type="entry name" value="Transketolase_CS"/>
</dbReference>
<dbReference type="NCBIfam" id="TIGR00204">
    <property type="entry name" value="dxs"/>
    <property type="match status" value="1"/>
</dbReference>
<dbReference type="NCBIfam" id="NF003933">
    <property type="entry name" value="PRK05444.2-2"/>
    <property type="match status" value="1"/>
</dbReference>
<dbReference type="PANTHER" id="PTHR43322">
    <property type="entry name" value="1-D-DEOXYXYLULOSE 5-PHOSPHATE SYNTHASE-RELATED"/>
    <property type="match status" value="1"/>
</dbReference>
<dbReference type="PANTHER" id="PTHR43322:SF5">
    <property type="entry name" value="1-DEOXY-D-XYLULOSE-5-PHOSPHATE SYNTHASE, CHLOROPLASTIC"/>
    <property type="match status" value="1"/>
</dbReference>
<dbReference type="Pfam" id="PF13292">
    <property type="entry name" value="DXP_synthase_N"/>
    <property type="match status" value="1"/>
</dbReference>
<dbReference type="Pfam" id="PF02779">
    <property type="entry name" value="Transket_pyr"/>
    <property type="match status" value="1"/>
</dbReference>
<dbReference type="Pfam" id="PF02780">
    <property type="entry name" value="Transketolase_C"/>
    <property type="match status" value="1"/>
</dbReference>
<dbReference type="SMART" id="SM00861">
    <property type="entry name" value="Transket_pyr"/>
    <property type="match status" value="1"/>
</dbReference>
<dbReference type="SUPFAM" id="SSF52518">
    <property type="entry name" value="Thiamin diphosphate-binding fold (THDP-binding)"/>
    <property type="match status" value="2"/>
</dbReference>
<dbReference type="SUPFAM" id="SSF52922">
    <property type="entry name" value="TK C-terminal domain-like"/>
    <property type="match status" value="1"/>
</dbReference>
<dbReference type="PROSITE" id="PS00801">
    <property type="entry name" value="TRANSKETOLASE_1"/>
    <property type="match status" value="1"/>
</dbReference>
<dbReference type="PROSITE" id="PS00802">
    <property type="entry name" value="TRANSKETOLASE_2"/>
    <property type="match status" value="1"/>
</dbReference>
<organism>
    <name type="scientific">Shewanella loihica (strain ATCC BAA-1088 / PV-4)</name>
    <dbReference type="NCBI Taxonomy" id="323850"/>
    <lineage>
        <taxon>Bacteria</taxon>
        <taxon>Pseudomonadati</taxon>
        <taxon>Pseudomonadota</taxon>
        <taxon>Gammaproteobacteria</taxon>
        <taxon>Alteromonadales</taxon>
        <taxon>Shewanellaceae</taxon>
        <taxon>Shewanella</taxon>
    </lineage>
</organism>
<gene>
    <name evidence="1" type="primary">dxs</name>
    <name type="ordered locus">Shew_2771</name>
</gene>
<protein>
    <recommendedName>
        <fullName evidence="1">1-deoxy-D-xylulose-5-phosphate synthase</fullName>
        <ecNumber evidence="1">2.2.1.7</ecNumber>
    </recommendedName>
    <alternativeName>
        <fullName evidence="1">1-deoxyxylulose-5-phosphate synthase</fullName>
        <shortName evidence="1">DXP synthase</shortName>
        <shortName evidence="1">DXPS</shortName>
    </alternativeName>
</protein>
<comment type="function">
    <text evidence="1">Catalyzes the acyloin condensation reaction between C atoms 2 and 3 of pyruvate and glyceraldehyde 3-phosphate to yield 1-deoxy-D-xylulose-5-phosphate (DXP).</text>
</comment>
<comment type="catalytic activity">
    <reaction evidence="1">
        <text>D-glyceraldehyde 3-phosphate + pyruvate + H(+) = 1-deoxy-D-xylulose 5-phosphate + CO2</text>
        <dbReference type="Rhea" id="RHEA:12605"/>
        <dbReference type="ChEBI" id="CHEBI:15361"/>
        <dbReference type="ChEBI" id="CHEBI:15378"/>
        <dbReference type="ChEBI" id="CHEBI:16526"/>
        <dbReference type="ChEBI" id="CHEBI:57792"/>
        <dbReference type="ChEBI" id="CHEBI:59776"/>
        <dbReference type="EC" id="2.2.1.7"/>
    </reaction>
</comment>
<comment type="cofactor">
    <cofactor evidence="1">
        <name>Mg(2+)</name>
        <dbReference type="ChEBI" id="CHEBI:18420"/>
    </cofactor>
    <text evidence="1">Binds 1 Mg(2+) ion per subunit.</text>
</comment>
<comment type="cofactor">
    <cofactor evidence="1">
        <name>thiamine diphosphate</name>
        <dbReference type="ChEBI" id="CHEBI:58937"/>
    </cofactor>
    <text evidence="1">Binds 1 thiamine pyrophosphate per subunit.</text>
</comment>
<comment type="pathway">
    <text evidence="1">Metabolic intermediate biosynthesis; 1-deoxy-D-xylulose 5-phosphate biosynthesis; 1-deoxy-D-xylulose 5-phosphate from D-glyceraldehyde 3-phosphate and pyruvate: step 1/1.</text>
</comment>
<comment type="subunit">
    <text evidence="1">Homodimer.</text>
</comment>
<comment type="similarity">
    <text evidence="1">Belongs to the transketolase family. DXPS subfamily.</text>
</comment>
<sequence length="622" mass="67939">MSLDITKYPVLAQADTPDELRQLPQGVLPKLADELRSYLLQSVGISSGHFASGLGTVELTVALHYVYNTPFDRLIWDVGHQAYPHKILTGRRDKMPTIRQKGGIHPFPWREESEYDTFSVGHSGTSISAALAMAVAAEKEQAGRKVVAVIGDGAMTGGMVFEAMNHAGDLHNDMLVVLNDNEMSISENVGALNNHLAQLMSGRLYTTIRENSKKVLKGMPVIKEMAKRTEEHLKGMVVPGTMFEELGFNYIGPIDGHDVDALVETLRNMRNLSGPQILHIMTKKGRGYEPAEKDPIGWHAVPKFDPSTFAKPAAKPANPTFSQVFGRWLCDMAQKDDKVLGITPAMREGSGMVEFSQRFPNQYFDAAIAEQHAVTLAAGFACEGYKPVLAIYSTFLQRGYDQLIHDVALQKLPVIFAIDRGGIVGPDGPTHQGAFDLSYMRAIPNMVIMAPSDENECRQMLYTGYCYNEGPTAIRYPRGSATGEPQVETMTAYEIGKGLIKREGKKIAILNFGTTLASASQAAEALDATLADMRFVKPLDVELVKQLATSHDLLVTVEENAIMGGAGSGVLELLQQLKLPMPVLNIGLPDEFIKHGECGEILAELQLDGPGIEAQIRAYLAD</sequence>